<reference key="1">
    <citation type="submission" date="2004-10" db="EMBL/GenBank/DDBJ databases">
        <authorList>
            <consortium name="NIH - Xenopus Gene Collection (XGC) project"/>
        </authorList>
    </citation>
    <scope>NUCLEOTIDE SEQUENCE [LARGE SCALE MRNA]</scope>
    <source>
        <tissue>Embryo</tissue>
    </source>
</reference>
<name>CRE2A_XENLA</name>
<proteinExistence type="evidence at transcript level"/>
<keyword id="KW-0106">Calcium</keyword>
<keyword id="KW-1015">Disulfide bond</keyword>
<keyword id="KW-0245">EGF-like domain</keyword>
<keyword id="KW-0256">Endoplasmic reticulum</keyword>
<keyword id="KW-0325">Glycoprotein</keyword>
<keyword id="KW-1185">Reference proteome</keyword>
<keyword id="KW-0677">Repeat</keyword>
<keyword id="KW-0964">Secreted</keyword>
<keyword id="KW-0732">Signal</keyword>
<accession>Q5XH36</accession>
<feature type="signal peptide" evidence="2">
    <location>
        <begin position="1"/>
        <end position="24"/>
    </location>
</feature>
<feature type="chain" id="PRO_0000256249" description="Cysteine-rich with EGF-like domain protein 2-A">
    <location>
        <begin position="25"/>
        <end position="361"/>
    </location>
</feature>
<feature type="domain" description="EGF-like 1" evidence="3">
    <location>
        <begin position="134"/>
        <end position="176"/>
    </location>
</feature>
<feature type="repeat" description="FU 1">
    <location>
        <begin position="191"/>
        <end position="238"/>
    </location>
</feature>
<feature type="repeat" description="FU 2">
    <location>
        <begin position="251"/>
        <end position="298"/>
    </location>
</feature>
<feature type="domain" description="EGF-like 2; calcium-binding" evidence="3">
    <location>
        <begin position="288"/>
        <end position="329"/>
    </location>
</feature>
<feature type="region of interest" description="Disordered" evidence="4">
    <location>
        <begin position="341"/>
        <end position="361"/>
    </location>
</feature>
<feature type="compositionally biased region" description="Polar residues" evidence="4">
    <location>
        <begin position="346"/>
        <end position="361"/>
    </location>
</feature>
<feature type="glycosylation site" description="N-linked (GlcNAc...) asparagine" evidence="2">
    <location>
        <position position="188"/>
    </location>
</feature>
<feature type="glycosylation site" description="N-linked (GlcNAc...) asparagine" evidence="2">
    <location>
        <position position="303"/>
    </location>
</feature>
<feature type="glycosylation site" description="N-linked (GlcNAc...) asparagine" evidence="2">
    <location>
        <position position="352"/>
    </location>
</feature>
<feature type="disulfide bond" evidence="3">
    <location>
        <begin position="138"/>
        <end position="152"/>
    </location>
</feature>
<feature type="disulfide bond" evidence="3">
    <location>
        <begin position="146"/>
        <end position="164"/>
    </location>
</feature>
<feature type="disulfide bond" evidence="3">
    <location>
        <begin position="166"/>
        <end position="175"/>
    </location>
</feature>
<feature type="disulfide bond" evidence="3">
    <location>
        <begin position="292"/>
        <end position="306"/>
    </location>
</feature>
<feature type="disulfide bond" evidence="3">
    <location>
        <begin position="299"/>
        <end position="315"/>
    </location>
</feature>
<feature type="disulfide bond" evidence="3">
    <location>
        <begin position="317"/>
        <end position="328"/>
    </location>
</feature>
<comment type="function">
    <text evidence="1">Possible role in neuronal acetylcholine receptor transport.</text>
</comment>
<comment type="subcellular location">
    <subcellularLocation>
        <location>Secreted</location>
    </subcellularLocation>
    <subcellularLocation>
        <location evidence="1">Endoplasmic reticulum</location>
    </subcellularLocation>
</comment>
<comment type="similarity">
    <text evidence="5">Belongs to the CRELD family.</text>
</comment>
<dbReference type="EMBL" id="BC084239">
    <property type="protein sequence ID" value="AAH84239.1"/>
    <property type="molecule type" value="mRNA"/>
</dbReference>
<dbReference type="RefSeq" id="NP_001088243.1">
    <property type="nucleotide sequence ID" value="NM_001094774.1"/>
</dbReference>
<dbReference type="GlyCosmos" id="Q5XH36">
    <property type="glycosylation" value="3 sites, No reported glycans"/>
</dbReference>
<dbReference type="DNASU" id="495074"/>
<dbReference type="GeneID" id="495074"/>
<dbReference type="KEGG" id="xla:495074"/>
<dbReference type="AGR" id="Xenbase:XB-GENE-999017"/>
<dbReference type="CTD" id="495074"/>
<dbReference type="Xenbase" id="XB-GENE-999017">
    <property type="gene designation" value="creld2.S"/>
</dbReference>
<dbReference type="OrthoDB" id="19903at2759"/>
<dbReference type="Proteomes" id="UP000186698">
    <property type="component" value="Chromosome 3S"/>
</dbReference>
<dbReference type="Bgee" id="495074">
    <property type="expression patterns" value="Expressed in liver and 18 other cell types or tissues"/>
</dbReference>
<dbReference type="GO" id="GO:0005783">
    <property type="term" value="C:endoplasmic reticulum"/>
    <property type="evidence" value="ECO:0007669"/>
    <property type="project" value="UniProtKB-SubCell"/>
</dbReference>
<dbReference type="GO" id="GO:0005576">
    <property type="term" value="C:extracellular region"/>
    <property type="evidence" value="ECO:0007669"/>
    <property type="project" value="UniProtKB-SubCell"/>
</dbReference>
<dbReference type="GO" id="GO:0005509">
    <property type="term" value="F:calcium ion binding"/>
    <property type="evidence" value="ECO:0007669"/>
    <property type="project" value="InterPro"/>
</dbReference>
<dbReference type="CDD" id="cd00054">
    <property type="entry name" value="EGF_CA"/>
    <property type="match status" value="1"/>
</dbReference>
<dbReference type="CDD" id="cd00064">
    <property type="entry name" value="FU"/>
    <property type="match status" value="2"/>
</dbReference>
<dbReference type="FunFam" id="2.10.25.10:FF:000038">
    <property type="entry name" value="Fibrillin 2"/>
    <property type="match status" value="1"/>
</dbReference>
<dbReference type="Gene3D" id="2.10.25.10">
    <property type="entry name" value="Laminin"/>
    <property type="match status" value="1"/>
</dbReference>
<dbReference type="InterPro" id="IPR021852">
    <property type="entry name" value="DUF3456"/>
</dbReference>
<dbReference type="InterPro" id="IPR001881">
    <property type="entry name" value="EGF-like_Ca-bd_dom"/>
</dbReference>
<dbReference type="InterPro" id="IPR000742">
    <property type="entry name" value="EGF-like_dom"/>
</dbReference>
<dbReference type="InterPro" id="IPR000152">
    <property type="entry name" value="EGF-type_Asp/Asn_hydroxyl_site"/>
</dbReference>
<dbReference type="InterPro" id="IPR018097">
    <property type="entry name" value="EGF_Ca-bd_CS"/>
</dbReference>
<dbReference type="InterPro" id="IPR006212">
    <property type="entry name" value="Furin_repeat"/>
</dbReference>
<dbReference type="InterPro" id="IPR009030">
    <property type="entry name" value="Growth_fac_rcpt_cys_sf"/>
</dbReference>
<dbReference type="InterPro" id="IPR002049">
    <property type="entry name" value="LE_dom"/>
</dbReference>
<dbReference type="InterPro" id="IPR049883">
    <property type="entry name" value="NOTCH1_EGF-like"/>
</dbReference>
<dbReference type="PANTHER" id="PTHR24039:SF28">
    <property type="entry name" value="EGF-LIKE DOMAIN-CONTAINING PROTEIN"/>
    <property type="match status" value="1"/>
</dbReference>
<dbReference type="PANTHER" id="PTHR24039">
    <property type="entry name" value="FIBRILLIN-RELATED"/>
    <property type="match status" value="1"/>
</dbReference>
<dbReference type="Pfam" id="PF11938">
    <property type="entry name" value="DUF3456"/>
    <property type="match status" value="2"/>
</dbReference>
<dbReference type="Pfam" id="PF07645">
    <property type="entry name" value="EGF_CA"/>
    <property type="match status" value="2"/>
</dbReference>
<dbReference type="SMART" id="SM00181">
    <property type="entry name" value="EGF"/>
    <property type="match status" value="3"/>
</dbReference>
<dbReference type="SMART" id="SM00179">
    <property type="entry name" value="EGF_CA"/>
    <property type="match status" value="2"/>
</dbReference>
<dbReference type="SMART" id="SM00261">
    <property type="entry name" value="FU"/>
    <property type="match status" value="2"/>
</dbReference>
<dbReference type="SUPFAM" id="SSF57184">
    <property type="entry name" value="Growth factor receptor domain"/>
    <property type="match status" value="1"/>
</dbReference>
<dbReference type="PROSITE" id="PS00010">
    <property type="entry name" value="ASX_HYDROXYL"/>
    <property type="match status" value="1"/>
</dbReference>
<dbReference type="PROSITE" id="PS00022">
    <property type="entry name" value="EGF_1"/>
    <property type="match status" value="1"/>
</dbReference>
<dbReference type="PROSITE" id="PS01186">
    <property type="entry name" value="EGF_2"/>
    <property type="match status" value="1"/>
</dbReference>
<dbReference type="PROSITE" id="PS50026">
    <property type="entry name" value="EGF_3"/>
    <property type="match status" value="2"/>
</dbReference>
<dbReference type="PROSITE" id="PS01187">
    <property type="entry name" value="EGF_CA"/>
    <property type="match status" value="2"/>
</dbReference>
<gene>
    <name type="primary">creld2-a</name>
</gene>
<organism>
    <name type="scientific">Xenopus laevis</name>
    <name type="common">African clawed frog</name>
    <dbReference type="NCBI Taxonomy" id="8355"/>
    <lineage>
        <taxon>Eukaryota</taxon>
        <taxon>Metazoa</taxon>
        <taxon>Chordata</taxon>
        <taxon>Craniata</taxon>
        <taxon>Vertebrata</taxon>
        <taxon>Euteleostomi</taxon>
        <taxon>Amphibia</taxon>
        <taxon>Batrachia</taxon>
        <taxon>Anura</taxon>
        <taxon>Pipoidea</taxon>
        <taxon>Pipidae</taxon>
        <taxon>Xenopodinae</taxon>
        <taxon>Xenopus</taxon>
        <taxon>Xenopus</taxon>
    </lineage>
</organism>
<evidence type="ECO:0000250" key="1"/>
<evidence type="ECO:0000255" key="2"/>
<evidence type="ECO:0000255" key="3">
    <source>
        <dbReference type="PROSITE-ProRule" id="PRU00076"/>
    </source>
</evidence>
<evidence type="ECO:0000256" key="4">
    <source>
        <dbReference type="SAM" id="MobiDB-lite"/>
    </source>
</evidence>
<evidence type="ECO:0000305" key="5"/>
<sequence length="361" mass="39745">MNGSRALHLSAWLLLCLLCSAAVARDDSCETCRKLVDRFHKGLENTAKKNFGGGNTAWEEKTLSKYESSEIRLVEIIENLCDSSDFECNHMVEEHEEQIEKWWFKMKKKYPDLLKWFCIETIKVCCPPGTYGPDCLACLGGSERPCHGNGFCNGDGTRSGDGLCRCEAEYTGPFCLECADEYFSSERNDTYSLCTACNQACKTCDGPSNEDCKECKNGWIKDDGKCVDLNECASEESPCKDSQYCLNTEGSFLCKECDGSCLGCSGEGPENCKDCATGYVLLAEKCTDVDECDASEQVCSRENETCLNTAGSYKCTCSEGFEDKEGNCVKIMEAENTEVTDGEMGTSASDINISNTAHEDL</sequence>
<protein>
    <recommendedName>
        <fullName>Cysteine-rich with EGF-like domain protein 2-A</fullName>
    </recommendedName>
</protein>